<sequence>MLNNFERVQILSDALPFVQRFHGRTLVVKYGGSAMKNVYLKSKIIEDILFLSYIGIKVVIVHGGGPMINHWLKQVNIQPKFFNGIRVTDKDTMELVEMVLVGKVNKDLVTLLNRSSNLAVGLSGKDANLVVASSFFPDQKDNYTGKVQQVNIEIVNLLLSSGYIPVVASVASDLNGQAYNINADSVAGAIAECLNAEKLILLTDTPGIMSDINDPSSLIKYLNISQLEELKSQKIILGGMIPKVDCCIKALQGNVSSAHIIDGSVEHALLLEILTSAGIGSMLVL</sequence>
<proteinExistence type="inferred from homology"/>
<keyword id="KW-0028">Amino-acid biosynthesis</keyword>
<keyword id="KW-0055">Arginine biosynthesis</keyword>
<keyword id="KW-0067">ATP-binding</keyword>
<keyword id="KW-0150">Chloroplast</keyword>
<keyword id="KW-0418">Kinase</keyword>
<keyword id="KW-0547">Nucleotide-binding</keyword>
<keyword id="KW-0934">Plastid</keyword>
<keyword id="KW-0808">Transferase</keyword>
<accession>Q6B8Z0</accession>
<feature type="chain" id="PRO_0000112708" description="Acetylglutamate kinase">
    <location>
        <begin position="1"/>
        <end position="285"/>
    </location>
</feature>
<feature type="binding site" evidence="1">
    <location>
        <begin position="64"/>
        <end position="65"/>
    </location>
    <ligand>
        <name>substrate</name>
    </ligand>
</feature>
<feature type="binding site" evidence="1">
    <location>
        <position position="86"/>
    </location>
    <ligand>
        <name>substrate</name>
    </ligand>
</feature>
<feature type="binding site" evidence="1">
    <location>
        <position position="180"/>
    </location>
    <ligand>
        <name>substrate</name>
    </ligand>
</feature>
<feature type="site" description="Transition state stabilizer" evidence="1">
    <location>
        <position position="29"/>
    </location>
</feature>
<feature type="site" description="Transition state stabilizer" evidence="1">
    <location>
        <position position="243"/>
    </location>
</feature>
<organism>
    <name type="scientific">Gracilaria tenuistipitata var. liui</name>
    <name type="common">Red alga</name>
    <dbReference type="NCBI Taxonomy" id="285951"/>
    <lineage>
        <taxon>Eukaryota</taxon>
        <taxon>Rhodophyta</taxon>
        <taxon>Florideophyceae</taxon>
        <taxon>Rhodymeniophycidae</taxon>
        <taxon>Gracilariales</taxon>
        <taxon>Gracilariaceae</taxon>
        <taxon>Gracilaria</taxon>
        <taxon>Gracilaria tenuistipitata</taxon>
    </lineage>
</organism>
<comment type="function">
    <text evidence="1">Catalyzes the ATP-dependent phosphorylation of N-acetyl-L-glutamate.</text>
</comment>
<comment type="catalytic activity">
    <reaction evidence="1">
        <text>N-acetyl-L-glutamate + ATP = N-acetyl-L-glutamyl 5-phosphate + ADP</text>
        <dbReference type="Rhea" id="RHEA:14629"/>
        <dbReference type="ChEBI" id="CHEBI:30616"/>
        <dbReference type="ChEBI" id="CHEBI:44337"/>
        <dbReference type="ChEBI" id="CHEBI:57936"/>
        <dbReference type="ChEBI" id="CHEBI:456216"/>
        <dbReference type="EC" id="2.7.2.8"/>
    </reaction>
</comment>
<comment type="pathway">
    <text evidence="1">Amino-acid biosynthesis; L-arginine biosynthesis; N(2)-acetyl-L-ornithine from L-glutamate: step 2/4.</text>
</comment>
<comment type="subcellular location">
    <subcellularLocation>
        <location evidence="1">Plastid</location>
        <location evidence="1">Chloroplast</location>
    </subcellularLocation>
</comment>
<comment type="similarity">
    <text evidence="1">Belongs to the acetylglutamate kinase family. ArgB subfamily.</text>
</comment>
<protein>
    <recommendedName>
        <fullName evidence="1">Acetylglutamate kinase</fullName>
        <ecNumber evidence="1">2.7.2.8</ecNumber>
    </recommendedName>
    <alternativeName>
        <fullName evidence="1">N-acetyl-L-glutamate 5-phosphotransferase</fullName>
    </alternativeName>
    <alternativeName>
        <fullName evidence="1">NAG kinase</fullName>
        <shortName evidence="1">NAGK</shortName>
    </alternativeName>
</protein>
<geneLocation type="chloroplast"/>
<evidence type="ECO:0000255" key="1">
    <source>
        <dbReference type="HAMAP-Rule" id="MF_00082"/>
    </source>
</evidence>
<dbReference type="EC" id="2.7.2.8" evidence="1"/>
<dbReference type="EMBL" id="AY673996">
    <property type="protein sequence ID" value="AAT79645.1"/>
    <property type="molecule type" value="Genomic_DNA"/>
</dbReference>
<dbReference type="RefSeq" id="YP_063570.1">
    <property type="nucleotide sequence ID" value="NC_006137.1"/>
</dbReference>
<dbReference type="SMR" id="Q6B8Z0"/>
<dbReference type="GeneID" id="2944008"/>
<dbReference type="UniPathway" id="UPA00068">
    <property type="reaction ID" value="UER00107"/>
</dbReference>
<dbReference type="GO" id="GO:0009507">
    <property type="term" value="C:chloroplast"/>
    <property type="evidence" value="ECO:0007669"/>
    <property type="project" value="UniProtKB-SubCell"/>
</dbReference>
<dbReference type="GO" id="GO:0003991">
    <property type="term" value="F:acetylglutamate kinase activity"/>
    <property type="evidence" value="ECO:0007669"/>
    <property type="project" value="UniProtKB-UniRule"/>
</dbReference>
<dbReference type="GO" id="GO:0005524">
    <property type="term" value="F:ATP binding"/>
    <property type="evidence" value="ECO:0007669"/>
    <property type="project" value="UniProtKB-UniRule"/>
</dbReference>
<dbReference type="GO" id="GO:0042450">
    <property type="term" value="P:arginine biosynthetic process via ornithine"/>
    <property type="evidence" value="ECO:0007669"/>
    <property type="project" value="UniProtKB-UniRule"/>
</dbReference>
<dbReference type="GO" id="GO:0006526">
    <property type="term" value="P:L-arginine biosynthetic process"/>
    <property type="evidence" value="ECO:0007669"/>
    <property type="project" value="UniProtKB-UniPathway"/>
</dbReference>
<dbReference type="CDD" id="cd04250">
    <property type="entry name" value="AAK_NAGK-C"/>
    <property type="match status" value="1"/>
</dbReference>
<dbReference type="FunFam" id="3.40.1160.10:FF:000004">
    <property type="entry name" value="Acetylglutamate kinase"/>
    <property type="match status" value="1"/>
</dbReference>
<dbReference type="Gene3D" id="3.40.1160.10">
    <property type="entry name" value="Acetylglutamate kinase-like"/>
    <property type="match status" value="1"/>
</dbReference>
<dbReference type="HAMAP" id="MF_00082">
    <property type="entry name" value="ArgB"/>
    <property type="match status" value="1"/>
</dbReference>
<dbReference type="InterPro" id="IPR036393">
    <property type="entry name" value="AceGlu_kinase-like_sf"/>
</dbReference>
<dbReference type="InterPro" id="IPR004662">
    <property type="entry name" value="AcgluKinase_fam"/>
</dbReference>
<dbReference type="InterPro" id="IPR037528">
    <property type="entry name" value="ArgB"/>
</dbReference>
<dbReference type="InterPro" id="IPR001048">
    <property type="entry name" value="Asp/Glu/Uridylate_kinase"/>
</dbReference>
<dbReference type="InterPro" id="IPR001057">
    <property type="entry name" value="Glu/AcGlu_kinase"/>
</dbReference>
<dbReference type="InterPro" id="IPR041727">
    <property type="entry name" value="NAGK-C"/>
</dbReference>
<dbReference type="NCBIfam" id="TIGR00761">
    <property type="entry name" value="argB"/>
    <property type="match status" value="1"/>
</dbReference>
<dbReference type="PANTHER" id="PTHR23342">
    <property type="entry name" value="N-ACETYLGLUTAMATE SYNTHASE"/>
    <property type="match status" value="1"/>
</dbReference>
<dbReference type="PANTHER" id="PTHR23342:SF0">
    <property type="entry name" value="N-ACETYLGLUTAMATE SYNTHASE, MITOCHONDRIAL"/>
    <property type="match status" value="1"/>
</dbReference>
<dbReference type="Pfam" id="PF00696">
    <property type="entry name" value="AA_kinase"/>
    <property type="match status" value="1"/>
</dbReference>
<dbReference type="PIRSF" id="PIRSF000728">
    <property type="entry name" value="NAGK"/>
    <property type="match status" value="1"/>
</dbReference>
<dbReference type="PRINTS" id="PR00474">
    <property type="entry name" value="GLU5KINASE"/>
</dbReference>
<dbReference type="SUPFAM" id="SSF53633">
    <property type="entry name" value="Carbamate kinase-like"/>
    <property type="match status" value="1"/>
</dbReference>
<gene>
    <name evidence="1" type="primary">argB</name>
    <name type="ordered locus">Grc000064</name>
</gene>
<reference key="1">
    <citation type="journal article" date="2004" name="J. Mol. Evol.">
        <title>Comparative analysis of the complete plastid genome sequence of the red alga Gracilaria tenuistipitata var. liui provides insights into the evolution of rhodoplasts and their relationship to other plastids.</title>
        <authorList>
            <person name="Hagopian J.C."/>
            <person name="Reis M."/>
            <person name="Kitajima J.P."/>
            <person name="Bhattacharya D."/>
            <person name="de Oliveira M.C."/>
        </authorList>
    </citation>
    <scope>NUCLEOTIDE SEQUENCE [LARGE SCALE GENOMIC DNA]</scope>
</reference>
<name>ARGB_GRATL</name>